<comment type="function">
    <text evidence="1">Accessory subunit of the mitochondrial membrane respiratory chain NADH dehydrogenase (Complex I), that is believed not to be involved in catalysis. Complex I functions in the transfer of electrons from NADH to the respiratory chain. The immediate electron acceptor for the enzyme is believed to be ubiquinone (By similarity).</text>
</comment>
<comment type="subunit">
    <text evidence="1">Complex I is composed of about 45 different subunits.</text>
</comment>
<comment type="subcellular location">
    <subcellularLocation>
        <location evidence="1">Mitochondrion inner membrane</location>
        <topology evidence="1">Single-pass membrane protein</topology>
        <orientation evidence="1">Matrix side</orientation>
    </subcellularLocation>
</comment>
<comment type="similarity">
    <text evidence="3">Belongs to the complex I NDUFA13 subunit family.</text>
</comment>
<name>NDUAD_DICDI</name>
<proteinExistence type="inferred from homology"/>
<keyword id="KW-0249">Electron transport</keyword>
<keyword id="KW-0472">Membrane</keyword>
<keyword id="KW-0496">Mitochondrion</keyword>
<keyword id="KW-0999">Mitochondrion inner membrane</keyword>
<keyword id="KW-1185">Reference proteome</keyword>
<keyword id="KW-0679">Respiratory chain</keyword>
<keyword id="KW-0812">Transmembrane</keyword>
<keyword id="KW-1133">Transmembrane helix</keyword>
<keyword id="KW-0813">Transport</keyword>
<sequence length="113" mass="12894">MVGYRQKWVQDLPPAGGFPKLKYARTSTSPIPGAYIFAGVFSIMAVGTYIFFSDKVERNAREEEEKRRLSMILPILQAENDINFLASPHQNVYFTRWMPPQTGKRAAALLRDL</sequence>
<feature type="chain" id="PRO_0000328478" description="NADH dehydrogenase [ubiquinone] 1 alpha subcomplex subunit 13">
    <location>
        <begin position="1"/>
        <end position="113"/>
    </location>
</feature>
<feature type="transmembrane region" description="Helical" evidence="2">
    <location>
        <begin position="31"/>
        <end position="51"/>
    </location>
</feature>
<reference key="1">
    <citation type="journal article" date="2002" name="Nature">
        <title>Sequence and analysis of chromosome 2 of Dictyostelium discoideum.</title>
        <authorList>
            <person name="Gloeckner G."/>
            <person name="Eichinger L."/>
            <person name="Szafranski K."/>
            <person name="Pachebat J.A."/>
            <person name="Bankier A.T."/>
            <person name="Dear P.H."/>
            <person name="Lehmann R."/>
            <person name="Baumgart C."/>
            <person name="Parra G."/>
            <person name="Abril J.F."/>
            <person name="Guigo R."/>
            <person name="Kumpf K."/>
            <person name="Tunggal B."/>
            <person name="Cox E.C."/>
            <person name="Quail M.A."/>
            <person name="Platzer M."/>
            <person name="Rosenthal A."/>
            <person name="Noegel A.A."/>
        </authorList>
    </citation>
    <scope>NUCLEOTIDE SEQUENCE [LARGE SCALE GENOMIC DNA]</scope>
    <source>
        <strain>AX4</strain>
    </source>
</reference>
<reference key="2">
    <citation type="journal article" date="2005" name="Nature">
        <title>The genome of the social amoeba Dictyostelium discoideum.</title>
        <authorList>
            <person name="Eichinger L."/>
            <person name="Pachebat J.A."/>
            <person name="Gloeckner G."/>
            <person name="Rajandream M.A."/>
            <person name="Sucgang R."/>
            <person name="Berriman M."/>
            <person name="Song J."/>
            <person name="Olsen R."/>
            <person name="Szafranski K."/>
            <person name="Xu Q."/>
            <person name="Tunggal B."/>
            <person name="Kummerfeld S."/>
            <person name="Madera M."/>
            <person name="Konfortov B.A."/>
            <person name="Rivero F."/>
            <person name="Bankier A.T."/>
            <person name="Lehmann R."/>
            <person name="Hamlin N."/>
            <person name="Davies R."/>
            <person name="Gaudet P."/>
            <person name="Fey P."/>
            <person name="Pilcher K."/>
            <person name="Chen G."/>
            <person name="Saunders D."/>
            <person name="Sodergren E.J."/>
            <person name="Davis P."/>
            <person name="Kerhornou A."/>
            <person name="Nie X."/>
            <person name="Hall N."/>
            <person name="Anjard C."/>
            <person name="Hemphill L."/>
            <person name="Bason N."/>
            <person name="Farbrother P."/>
            <person name="Desany B."/>
            <person name="Just E."/>
            <person name="Morio T."/>
            <person name="Rost R."/>
            <person name="Churcher C.M."/>
            <person name="Cooper J."/>
            <person name="Haydock S."/>
            <person name="van Driessche N."/>
            <person name="Cronin A."/>
            <person name="Goodhead I."/>
            <person name="Muzny D.M."/>
            <person name="Mourier T."/>
            <person name="Pain A."/>
            <person name="Lu M."/>
            <person name="Harper D."/>
            <person name="Lindsay R."/>
            <person name="Hauser H."/>
            <person name="James K.D."/>
            <person name="Quiles M."/>
            <person name="Madan Babu M."/>
            <person name="Saito T."/>
            <person name="Buchrieser C."/>
            <person name="Wardroper A."/>
            <person name="Felder M."/>
            <person name="Thangavelu M."/>
            <person name="Johnson D."/>
            <person name="Knights A."/>
            <person name="Loulseged H."/>
            <person name="Mungall K.L."/>
            <person name="Oliver K."/>
            <person name="Price C."/>
            <person name="Quail M.A."/>
            <person name="Urushihara H."/>
            <person name="Hernandez J."/>
            <person name="Rabbinowitsch E."/>
            <person name="Steffen D."/>
            <person name="Sanders M."/>
            <person name="Ma J."/>
            <person name="Kohara Y."/>
            <person name="Sharp S."/>
            <person name="Simmonds M.N."/>
            <person name="Spiegler S."/>
            <person name="Tivey A."/>
            <person name="Sugano S."/>
            <person name="White B."/>
            <person name="Walker D."/>
            <person name="Woodward J.R."/>
            <person name="Winckler T."/>
            <person name="Tanaka Y."/>
            <person name="Shaulsky G."/>
            <person name="Schleicher M."/>
            <person name="Weinstock G.M."/>
            <person name="Rosenthal A."/>
            <person name="Cox E.C."/>
            <person name="Chisholm R.L."/>
            <person name="Gibbs R.A."/>
            <person name="Loomis W.F."/>
            <person name="Platzer M."/>
            <person name="Kay R.R."/>
            <person name="Williams J.G."/>
            <person name="Dear P.H."/>
            <person name="Noegel A.A."/>
            <person name="Barrell B.G."/>
            <person name="Kuspa A."/>
        </authorList>
    </citation>
    <scope>NUCLEOTIDE SEQUENCE [LARGE SCALE GENOMIC DNA]</scope>
    <source>
        <strain>AX4</strain>
    </source>
</reference>
<dbReference type="EMBL" id="AAFI02000012">
    <property type="protein sequence ID" value="EAL70048.1"/>
    <property type="molecule type" value="Genomic_DNA"/>
</dbReference>
<dbReference type="RefSeq" id="XP_643939.1">
    <property type="nucleotide sequence ID" value="XM_638847.1"/>
</dbReference>
<dbReference type="SMR" id="Q86IZ2"/>
<dbReference type="FunCoup" id="Q86IZ2">
    <property type="interactions" value="29"/>
</dbReference>
<dbReference type="STRING" id="44689.Q86IZ2"/>
<dbReference type="PaxDb" id="44689-DDB0238775"/>
<dbReference type="EnsemblProtists" id="EAL70048">
    <property type="protein sequence ID" value="EAL70048"/>
    <property type="gene ID" value="DDB_G0274311"/>
</dbReference>
<dbReference type="GeneID" id="8619367"/>
<dbReference type="KEGG" id="ddi:DDB_G0274311"/>
<dbReference type="dictyBase" id="DDB_G0274311"/>
<dbReference type="VEuPathDB" id="AmoebaDB:DDB_G0274311"/>
<dbReference type="eggNOG" id="ENOG502RIAU">
    <property type="taxonomic scope" value="Eukaryota"/>
</dbReference>
<dbReference type="HOGENOM" id="CLU_2138201_0_0_1"/>
<dbReference type="InParanoid" id="Q86IZ2"/>
<dbReference type="OMA" id="TRWMPPQ"/>
<dbReference type="PhylomeDB" id="Q86IZ2"/>
<dbReference type="PRO" id="PR:Q86IZ2"/>
<dbReference type="Proteomes" id="UP000002195">
    <property type="component" value="Chromosome 2"/>
</dbReference>
<dbReference type="GO" id="GO:0005743">
    <property type="term" value="C:mitochondrial inner membrane"/>
    <property type="evidence" value="ECO:0007669"/>
    <property type="project" value="UniProtKB-SubCell"/>
</dbReference>
<dbReference type="GO" id="GO:0045271">
    <property type="term" value="C:respiratory chain complex I"/>
    <property type="evidence" value="ECO:0000318"/>
    <property type="project" value="GO_Central"/>
</dbReference>
<dbReference type="InterPro" id="IPR009346">
    <property type="entry name" value="GRIM-19"/>
</dbReference>
<dbReference type="PANTHER" id="PTHR12966:SF0">
    <property type="entry name" value="NADH DEHYDROGENASE [UBIQUINONE] 1 ALPHA SUBCOMPLEX SUBUNIT 13"/>
    <property type="match status" value="1"/>
</dbReference>
<dbReference type="PANTHER" id="PTHR12966">
    <property type="entry name" value="NADH DEHYDROGENASE UBIQUINONE 1 ALPHA SUBCOMPLEX SUBUNIT 13"/>
    <property type="match status" value="1"/>
</dbReference>
<dbReference type="Pfam" id="PF06212">
    <property type="entry name" value="GRIM-19"/>
    <property type="match status" value="1"/>
</dbReference>
<evidence type="ECO:0000250" key="1"/>
<evidence type="ECO:0000255" key="2"/>
<evidence type="ECO:0000305" key="3"/>
<protein>
    <recommendedName>
        <fullName>NADH dehydrogenase [ubiquinone] 1 alpha subcomplex subunit 13</fullName>
    </recommendedName>
</protein>
<organism>
    <name type="scientific">Dictyostelium discoideum</name>
    <name type="common">Social amoeba</name>
    <dbReference type="NCBI Taxonomy" id="44689"/>
    <lineage>
        <taxon>Eukaryota</taxon>
        <taxon>Amoebozoa</taxon>
        <taxon>Evosea</taxon>
        <taxon>Eumycetozoa</taxon>
        <taxon>Dictyostelia</taxon>
        <taxon>Dictyosteliales</taxon>
        <taxon>Dictyosteliaceae</taxon>
        <taxon>Dictyostelium</taxon>
    </lineage>
</organism>
<accession>Q86IZ2</accession>
<accession>Q555X1</accession>
<gene>
    <name type="primary">ndufa13</name>
    <name type="ORF">DDB_G0274311</name>
</gene>